<protein>
    <recommendedName>
        <fullName evidence="1">3-methyl-2-oxobutanoate hydroxymethyltransferase</fullName>
        <ecNumber evidence="1">2.1.2.11</ecNumber>
    </recommendedName>
    <alternativeName>
        <fullName evidence="1">Ketopantoate hydroxymethyltransferase</fullName>
        <shortName evidence="1">KPHMT</shortName>
    </alternativeName>
</protein>
<keyword id="KW-0963">Cytoplasm</keyword>
<keyword id="KW-0460">Magnesium</keyword>
<keyword id="KW-0479">Metal-binding</keyword>
<keyword id="KW-0566">Pantothenate biosynthesis</keyword>
<keyword id="KW-0808">Transferase</keyword>
<dbReference type="EC" id="2.1.2.11" evidence="1"/>
<dbReference type="EMBL" id="CP000378">
    <property type="protein sequence ID" value="ABF75185.1"/>
    <property type="molecule type" value="Genomic_DNA"/>
</dbReference>
<dbReference type="SMR" id="Q1BYX0"/>
<dbReference type="HOGENOM" id="CLU_036645_1_0_4"/>
<dbReference type="UniPathway" id="UPA00028">
    <property type="reaction ID" value="UER00003"/>
</dbReference>
<dbReference type="GO" id="GO:0005737">
    <property type="term" value="C:cytoplasm"/>
    <property type="evidence" value="ECO:0007669"/>
    <property type="project" value="UniProtKB-SubCell"/>
</dbReference>
<dbReference type="GO" id="GO:0003864">
    <property type="term" value="F:3-methyl-2-oxobutanoate hydroxymethyltransferase activity"/>
    <property type="evidence" value="ECO:0007669"/>
    <property type="project" value="UniProtKB-UniRule"/>
</dbReference>
<dbReference type="GO" id="GO:0000287">
    <property type="term" value="F:magnesium ion binding"/>
    <property type="evidence" value="ECO:0007669"/>
    <property type="project" value="TreeGrafter"/>
</dbReference>
<dbReference type="GO" id="GO:0015940">
    <property type="term" value="P:pantothenate biosynthetic process"/>
    <property type="evidence" value="ECO:0007669"/>
    <property type="project" value="UniProtKB-UniRule"/>
</dbReference>
<dbReference type="CDD" id="cd06557">
    <property type="entry name" value="KPHMT-like"/>
    <property type="match status" value="1"/>
</dbReference>
<dbReference type="FunFam" id="3.20.20.60:FF:000003">
    <property type="entry name" value="3-methyl-2-oxobutanoate hydroxymethyltransferase"/>
    <property type="match status" value="1"/>
</dbReference>
<dbReference type="Gene3D" id="3.20.20.60">
    <property type="entry name" value="Phosphoenolpyruvate-binding domains"/>
    <property type="match status" value="1"/>
</dbReference>
<dbReference type="HAMAP" id="MF_00156">
    <property type="entry name" value="PanB"/>
    <property type="match status" value="1"/>
</dbReference>
<dbReference type="InterPro" id="IPR003700">
    <property type="entry name" value="Pantoate_hydroxy_MeTrfase"/>
</dbReference>
<dbReference type="InterPro" id="IPR015813">
    <property type="entry name" value="Pyrv/PenolPyrv_kinase-like_dom"/>
</dbReference>
<dbReference type="InterPro" id="IPR040442">
    <property type="entry name" value="Pyrv_kinase-like_dom_sf"/>
</dbReference>
<dbReference type="NCBIfam" id="TIGR00222">
    <property type="entry name" value="panB"/>
    <property type="match status" value="1"/>
</dbReference>
<dbReference type="NCBIfam" id="NF001452">
    <property type="entry name" value="PRK00311.1"/>
    <property type="match status" value="1"/>
</dbReference>
<dbReference type="PANTHER" id="PTHR20881">
    <property type="entry name" value="3-METHYL-2-OXOBUTANOATE HYDROXYMETHYLTRANSFERASE"/>
    <property type="match status" value="1"/>
</dbReference>
<dbReference type="PANTHER" id="PTHR20881:SF0">
    <property type="entry name" value="3-METHYL-2-OXOBUTANOATE HYDROXYMETHYLTRANSFERASE"/>
    <property type="match status" value="1"/>
</dbReference>
<dbReference type="Pfam" id="PF02548">
    <property type="entry name" value="Pantoate_transf"/>
    <property type="match status" value="1"/>
</dbReference>
<dbReference type="PIRSF" id="PIRSF000388">
    <property type="entry name" value="Pantoate_hydroxy_MeTrfase"/>
    <property type="match status" value="1"/>
</dbReference>
<dbReference type="SUPFAM" id="SSF51621">
    <property type="entry name" value="Phosphoenolpyruvate/pyruvate domain"/>
    <property type="match status" value="1"/>
</dbReference>
<accession>Q1BYX0</accession>
<sequence length="271" mass="28752">MTYLQESSRPAVTVPKLQAMRDAGEKIAMLTCYDASFSALLDRAGTDVLLIGDSLGNVLQGHTTTLPVSIDDIAYHTACVARAQPRALVVADLPFGTYGTPVDAFANAVKLMRAGAQMVKLEGGEWLADTIRFLVERSVPVCAHLGLTPQSVHAFGGFKVQGKTEAGAAQLLRDARAIEDAGAQLVVLEAVPTLVAAEVTHMLKIPTIGIGAGVDCSGQVLVLHDMLGVFPGKRPRFVKDFMQGQPNIQAAVEAYVSAVKDRSFPGPEHSF</sequence>
<reference key="1">
    <citation type="submission" date="2006-05" db="EMBL/GenBank/DDBJ databases">
        <title>Complete sequence of chromosome 1 of Burkholderia cenocepacia AU 1054.</title>
        <authorList>
            <consortium name="US DOE Joint Genome Institute"/>
            <person name="Copeland A."/>
            <person name="Lucas S."/>
            <person name="Lapidus A."/>
            <person name="Barry K."/>
            <person name="Detter J.C."/>
            <person name="Glavina del Rio T."/>
            <person name="Hammon N."/>
            <person name="Israni S."/>
            <person name="Dalin E."/>
            <person name="Tice H."/>
            <person name="Pitluck S."/>
            <person name="Chain P."/>
            <person name="Malfatti S."/>
            <person name="Shin M."/>
            <person name="Vergez L."/>
            <person name="Schmutz J."/>
            <person name="Larimer F."/>
            <person name="Land M."/>
            <person name="Hauser L."/>
            <person name="Kyrpides N."/>
            <person name="Lykidis A."/>
            <person name="LiPuma J.J."/>
            <person name="Konstantinidis K."/>
            <person name="Tiedje J.M."/>
            <person name="Richardson P."/>
        </authorList>
    </citation>
    <scope>NUCLEOTIDE SEQUENCE [LARGE SCALE GENOMIC DNA]</scope>
    <source>
        <strain>AU 1054</strain>
    </source>
</reference>
<feature type="chain" id="PRO_0000297228" description="3-methyl-2-oxobutanoate hydroxymethyltransferase">
    <location>
        <begin position="1"/>
        <end position="271"/>
    </location>
</feature>
<feature type="active site" description="Proton acceptor" evidence="1">
    <location>
        <position position="189"/>
    </location>
</feature>
<feature type="binding site" evidence="1">
    <location>
        <begin position="53"/>
        <end position="54"/>
    </location>
    <ligand>
        <name>3-methyl-2-oxobutanoate</name>
        <dbReference type="ChEBI" id="CHEBI:11851"/>
    </ligand>
</feature>
<feature type="binding site" evidence="1">
    <location>
        <position position="53"/>
    </location>
    <ligand>
        <name>Mg(2+)</name>
        <dbReference type="ChEBI" id="CHEBI:18420"/>
    </ligand>
</feature>
<feature type="binding site" evidence="1">
    <location>
        <position position="92"/>
    </location>
    <ligand>
        <name>3-methyl-2-oxobutanoate</name>
        <dbReference type="ChEBI" id="CHEBI:11851"/>
    </ligand>
</feature>
<feature type="binding site" evidence="1">
    <location>
        <position position="92"/>
    </location>
    <ligand>
        <name>Mg(2+)</name>
        <dbReference type="ChEBI" id="CHEBI:18420"/>
    </ligand>
</feature>
<feature type="binding site" evidence="1">
    <location>
        <position position="120"/>
    </location>
    <ligand>
        <name>3-methyl-2-oxobutanoate</name>
        <dbReference type="ChEBI" id="CHEBI:11851"/>
    </ligand>
</feature>
<feature type="binding site" evidence="1">
    <location>
        <position position="122"/>
    </location>
    <ligand>
        <name>Mg(2+)</name>
        <dbReference type="ChEBI" id="CHEBI:18420"/>
    </ligand>
</feature>
<proteinExistence type="inferred from homology"/>
<gene>
    <name evidence="1" type="primary">panB</name>
    <name type="ordered locus">Bcen_0271</name>
</gene>
<comment type="function">
    <text evidence="1">Catalyzes the reversible reaction in which hydroxymethyl group from 5,10-methylenetetrahydrofolate is transferred onto alpha-ketoisovalerate to form ketopantoate.</text>
</comment>
<comment type="catalytic activity">
    <reaction evidence="1">
        <text>3-methyl-2-oxobutanoate + (6R)-5,10-methylene-5,6,7,8-tetrahydrofolate + H2O = 2-dehydropantoate + (6S)-5,6,7,8-tetrahydrofolate</text>
        <dbReference type="Rhea" id="RHEA:11824"/>
        <dbReference type="ChEBI" id="CHEBI:11561"/>
        <dbReference type="ChEBI" id="CHEBI:11851"/>
        <dbReference type="ChEBI" id="CHEBI:15377"/>
        <dbReference type="ChEBI" id="CHEBI:15636"/>
        <dbReference type="ChEBI" id="CHEBI:57453"/>
        <dbReference type="EC" id="2.1.2.11"/>
    </reaction>
</comment>
<comment type="cofactor">
    <cofactor evidence="1">
        <name>Mg(2+)</name>
        <dbReference type="ChEBI" id="CHEBI:18420"/>
    </cofactor>
    <text evidence="1">Binds 1 Mg(2+) ion per subunit.</text>
</comment>
<comment type="pathway">
    <text evidence="1">Cofactor biosynthesis; (R)-pantothenate biosynthesis; (R)-pantoate from 3-methyl-2-oxobutanoate: step 1/2.</text>
</comment>
<comment type="subunit">
    <text evidence="1">Homodecamer; pentamer of dimers.</text>
</comment>
<comment type="subcellular location">
    <subcellularLocation>
        <location evidence="1">Cytoplasm</location>
    </subcellularLocation>
</comment>
<comment type="similarity">
    <text evidence="1">Belongs to the PanB family.</text>
</comment>
<organism>
    <name type="scientific">Burkholderia orbicola (strain AU 1054)</name>
    <dbReference type="NCBI Taxonomy" id="331271"/>
    <lineage>
        <taxon>Bacteria</taxon>
        <taxon>Pseudomonadati</taxon>
        <taxon>Pseudomonadota</taxon>
        <taxon>Betaproteobacteria</taxon>
        <taxon>Burkholderiales</taxon>
        <taxon>Burkholderiaceae</taxon>
        <taxon>Burkholderia</taxon>
        <taxon>Burkholderia cepacia complex</taxon>
        <taxon>Burkholderia orbicola</taxon>
    </lineage>
</organism>
<name>PANB_BURO1</name>
<evidence type="ECO:0000255" key="1">
    <source>
        <dbReference type="HAMAP-Rule" id="MF_00156"/>
    </source>
</evidence>